<evidence type="ECO:0000255" key="1">
    <source>
        <dbReference type="HAMAP-Rule" id="MF_00154"/>
    </source>
</evidence>
<reference key="1">
    <citation type="journal article" date="2000" name="Proc. Natl. Acad. Sci. U.S.A.">
        <title>Archaeal adaptation to higher temperatures revealed by genomic sequence of Thermoplasma volcanium.</title>
        <authorList>
            <person name="Kawashima T."/>
            <person name="Amano N."/>
            <person name="Koike H."/>
            <person name="Makino S."/>
            <person name="Higuchi S."/>
            <person name="Kawashima-Ohya Y."/>
            <person name="Watanabe K."/>
            <person name="Yamazaki M."/>
            <person name="Kanehori K."/>
            <person name="Kawamoto T."/>
            <person name="Nunoshiba T."/>
            <person name="Yamamoto Y."/>
            <person name="Aramaki H."/>
            <person name="Makino K."/>
            <person name="Suzuki M."/>
        </authorList>
    </citation>
    <scope>NUCLEOTIDE SEQUENCE [LARGE SCALE GENOMIC DNA]</scope>
    <source>
        <strain>ATCC 51530 / DSM 4299 / JCM 9571 / NBRC 15438 / GSS1</strain>
    </source>
</reference>
<dbReference type="EC" id="2.5.1.141" evidence="1"/>
<dbReference type="EMBL" id="BA000011">
    <property type="protein sequence ID" value="BAB60298.1"/>
    <property type="molecule type" value="Genomic_DNA"/>
</dbReference>
<dbReference type="RefSeq" id="WP_010917390.1">
    <property type="nucleotide sequence ID" value="NC_002689.2"/>
</dbReference>
<dbReference type="SMR" id="Q979K5"/>
<dbReference type="STRING" id="273116.gene:9381956"/>
<dbReference type="PaxDb" id="273116-14325394"/>
<dbReference type="GeneID" id="1441272"/>
<dbReference type="KEGG" id="tvo:TVG1185779"/>
<dbReference type="eggNOG" id="arCOG00479">
    <property type="taxonomic scope" value="Archaea"/>
</dbReference>
<dbReference type="HOGENOM" id="CLU_029631_0_1_2"/>
<dbReference type="OrthoDB" id="131615at2157"/>
<dbReference type="PhylomeDB" id="Q979K5"/>
<dbReference type="UniPathway" id="UPA00834">
    <property type="reaction ID" value="UER00712"/>
</dbReference>
<dbReference type="Proteomes" id="UP000001017">
    <property type="component" value="Chromosome"/>
</dbReference>
<dbReference type="GO" id="GO:0005886">
    <property type="term" value="C:plasma membrane"/>
    <property type="evidence" value="ECO:0007669"/>
    <property type="project" value="UniProtKB-SubCell"/>
</dbReference>
<dbReference type="GO" id="GO:0008495">
    <property type="term" value="F:protoheme IX farnesyltransferase activity"/>
    <property type="evidence" value="ECO:0007669"/>
    <property type="project" value="UniProtKB-UniRule"/>
</dbReference>
<dbReference type="GO" id="GO:0048034">
    <property type="term" value="P:heme O biosynthetic process"/>
    <property type="evidence" value="ECO:0007669"/>
    <property type="project" value="UniProtKB-UniRule"/>
</dbReference>
<dbReference type="CDD" id="cd13957">
    <property type="entry name" value="PT_UbiA_Cox10"/>
    <property type="match status" value="1"/>
</dbReference>
<dbReference type="Gene3D" id="1.10.357.140">
    <property type="entry name" value="UbiA prenyltransferase"/>
    <property type="match status" value="1"/>
</dbReference>
<dbReference type="HAMAP" id="MF_00154">
    <property type="entry name" value="CyoE_CtaB"/>
    <property type="match status" value="1"/>
</dbReference>
<dbReference type="InterPro" id="IPR006369">
    <property type="entry name" value="Protohaem_IX_farnesylTrfase"/>
</dbReference>
<dbReference type="InterPro" id="IPR000537">
    <property type="entry name" value="UbiA_prenyltransferase"/>
</dbReference>
<dbReference type="InterPro" id="IPR044878">
    <property type="entry name" value="UbiA_sf"/>
</dbReference>
<dbReference type="NCBIfam" id="TIGR01473">
    <property type="entry name" value="cyoE_ctaB"/>
    <property type="match status" value="1"/>
</dbReference>
<dbReference type="NCBIfam" id="NF003349">
    <property type="entry name" value="PRK04375.1-2"/>
    <property type="match status" value="1"/>
</dbReference>
<dbReference type="PANTHER" id="PTHR43448">
    <property type="entry name" value="PROTOHEME IX FARNESYLTRANSFERASE, MITOCHONDRIAL"/>
    <property type="match status" value="1"/>
</dbReference>
<dbReference type="PANTHER" id="PTHR43448:SF2">
    <property type="entry name" value="PROTOHEME IX FARNESYLTRANSFERASE, MITOCHONDRIAL"/>
    <property type="match status" value="1"/>
</dbReference>
<dbReference type="Pfam" id="PF01040">
    <property type="entry name" value="UbiA"/>
    <property type="match status" value="1"/>
</dbReference>
<feature type="chain" id="PRO_0000327201" description="Protoheme IX farnesyltransferase">
    <location>
        <begin position="1"/>
        <end position="288"/>
    </location>
</feature>
<feature type="transmembrane region" description="Helical" evidence="1">
    <location>
        <begin position="16"/>
        <end position="36"/>
    </location>
</feature>
<feature type="transmembrane region" description="Helical" evidence="1">
    <location>
        <begin position="37"/>
        <end position="57"/>
    </location>
</feature>
<feature type="transmembrane region" description="Helical" evidence="1">
    <location>
        <begin position="88"/>
        <end position="108"/>
    </location>
</feature>
<feature type="transmembrane region" description="Helical" evidence="1">
    <location>
        <begin position="111"/>
        <end position="131"/>
    </location>
</feature>
<feature type="transmembrane region" description="Helical" evidence="1">
    <location>
        <begin position="138"/>
        <end position="158"/>
    </location>
</feature>
<feature type="transmembrane region" description="Helical" evidence="1">
    <location>
        <begin position="162"/>
        <end position="182"/>
    </location>
</feature>
<feature type="transmembrane region" description="Helical" evidence="1">
    <location>
        <begin position="210"/>
        <end position="230"/>
    </location>
</feature>
<feature type="transmembrane region" description="Helical" evidence="1">
    <location>
        <begin position="236"/>
        <end position="256"/>
    </location>
</feature>
<feature type="transmembrane region" description="Helical" evidence="1">
    <location>
        <begin position="265"/>
        <end position="285"/>
    </location>
</feature>
<gene>
    <name evidence="1" type="primary">ctaB</name>
    <name type="ordered locus">TV1156</name>
    <name type="ORF">TVG1185779</name>
</gene>
<accession>Q979K5</accession>
<sequence>MVSRVRLYFGYTKPKVWSLLVFVGVIGAIVAINRFTLTNILLILIATVSITLGSMGAEATTNYIDRDIDAIMDRTKKRPLVTGQIKPVKGLYFGLILMFLSIIILLFFSKYLAAVFMAIGLFDNVFIYSYLTKRRTPWNIILGGFSGGFPVVIGWYTVTNAFSVLPWFLFALVVIWIPIHVWSLAYRYRDDYNRARVPMMTSIQSDRISAICISSSAVILFIFSIIPVFFKAMPYTYMIVATIIAIPMLVYSVLFVRKPDRKSSLKLFIYSSPYLAIIFVLVLIFKYL</sequence>
<keyword id="KW-1003">Cell membrane</keyword>
<keyword id="KW-0350">Heme biosynthesis</keyword>
<keyword id="KW-0472">Membrane</keyword>
<keyword id="KW-0808">Transferase</keyword>
<keyword id="KW-0812">Transmembrane</keyword>
<keyword id="KW-1133">Transmembrane helix</keyword>
<protein>
    <recommendedName>
        <fullName evidence="1">Protoheme IX farnesyltransferase</fullName>
        <ecNumber evidence="1">2.5.1.141</ecNumber>
    </recommendedName>
    <alternativeName>
        <fullName evidence="1">Heme B farnesyltransferase</fullName>
    </alternativeName>
    <alternativeName>
        <fullName evidence="1">Heme O synthase</fullName>
    </alternativeName>
</protein>
<name>COXX_THEVO</name>
<proteinExistence type="inferred from homology"/>
<organism>
    <name type="scientific">Thermoplasma volcanium (strain ATCC 51530 / DSM 4299 / JCM 9571 / NBRC 15438 / GSS1)</name>
    <dbReference type="NCBI Taxonomy" id="273116"/>
    <lineage>
        <taxon>Archaea</taxon>
        <taxon>Methanobacteriati</taxon>
        <taxon>Thermoplasmatota</taxon>
        <taxon>Thermoplasmata</taxon>
        <taxon>Thermoplasmatales</taxon>
        <taxon>Thermoplasmataceae</taxon>
        <taxon>Thermoplasma</taxon>
    </lineage>
</organism>
<comment type="function">
    <text evidence="1">Converts heme B (protoheme IX) to heme O by substitution of the vinyl group on carbon 2 of heme B porphyrin ring with a hydroxyethyl farnesyl side group.</text>
</comment>
<comment type="catalytic activity">
    <reaction evidence="1">
        <text>heme b + (2E,6E)-farnesyl diphosphate + H2O = Fe(II)-heme o + diphosphate</text>
        <dbReference type="Rhea" id="RHEA:28070"/>
        <dbReference type="ChEBI" id="CHEBI:15377"/>
        <dbReference type="ChEBI" id="CHEBI:33019"/>
        <dbReference type="ChEBI" id="CHEBI:60344"/>
        <dbReference type="ChEBI" id="CHEBI:60530"/>
        <dbReference type="ChEBI" id="CHEBI:175763"/>
        <dbReference type="EC" id="2.5.1.141"/>
    </reaction>
</comment>
<comment type="pathway">
    <text evidence="1">Porphyrin-containing compound metabolism; heme O biosynthesis; heme O from protoheme: step 1/1.</text>
</comment>
<comment type="subcellular location">
    <subcellularLocation>
        <location evidence="1">Cell membrane</location>
        <topology evidence="1">Multi-pass membrane protein</topology>
    </subcellularLocation>
</comment>
<comment type="miscellaneous">
    <text evidence="1">Carbon 2 of the heme B porphyrin ring is defined according to the Fischer nomenclature.</text>
</comment>
<comment type="similarity">
    <text evidence="1">Belongs to the UbiA prenyltransferase family. Protoheme IX farnesyltransferase subfamily.</text>
</comment>